<evidence type="ECO:0000250" key="1">
    <source>
        <dbReference type="UniProtKB" id="Q97U29"/>
    </source>
</evidence>
<evidence type="ECO:0000269" key="2">
    <source>
    </source>
</evidence>
<evidence type="ECO:0000305" key="3"/>
<comment type="function">
    <text evidence="2">Catalyzes the phosphorylation of 2-keto-3-deoxygluconate (KDG) to produce 2-keto-3-deoxy-6-phosphogluconate (KDPG).</text>
</comment>
<comment type="catalytic activity">
    <reaction evidence="2">
        <text>2-dehydro-3-deoxy-D-gluconate + ATP = 2-dehydro-3-deoxy-6-phospho-D-gluconate + ADP + H(+)</text>
        <dbReference type="Rhea" id="RHEA:14797"/>
        <dbReference type="ChEBI" id="CHEBI:15378"/>
        <dbReference type="ChEBI" id="CHEBI:30616"/>
        <dbReference type="ChEBI" id="CHEBI:57569"/>
        <dbReference type="ChEBI" id="CHEBI:57990"/>
        <dbReference type="ChEBI" id="CHEBI:456216"/>
        <dbReference type="EC" id="2.7.1.45"/>
    </reaction>
</comment>
<comment type="biophysicochemical properties">
    <phDependence>
        <text evidence="2">Optimum pH is between 5.6 and 6.</text>
    </phDependence>
</comment>
<comment type="pathway">
    <text>Carbohydrate acid metabolism; 2-dehydro-3-deoxy-D-gluconate degradation; D-glyceraldehyde 3-phosphate and pyruvate from 2-dehydro-3-deoxy-D-gluconate: step 1/2.</text>
</comment>
<comment type="similarity">
    <text evidence="3">Belongs to the carbohydrate kinase pfkB family.</text>
</comment>
<feature type="chain" id="PRO_0000422661" description="2-dehydro-3-deoxygluconokinase">
    <location>
        <begin position="1"/>
        <end position="309"/>
    </location>
</feature>
<feature type="active site" description="Proton acceptor" evidence="1">
    <location>
        <position position="264"/>
    </location>
</feature>
<feature type="binding site" evidence="1">
    <location>
        <begin position="28"/>
        <end position="32"/>
    </location>
    <ligand>
        <name>substrate</name>
    </ligand>
</feature>
<feature type="binding site" evidence="1">
    <location>
        <position position="88"/>
    </location>
    <ligand>
        <name>substrate</name>
    </ligand>
</feature>
<feature type="binding site" evidence="1">
    <location>
        <begin position="102"/>
        <end position="104"/>
    </location>
    <ligand>
        <name>substrate</name>
    </ligand>
</feature>
<feature type="binding site" evidence="1">
    <location>
        <begin position="168"/>
        <end position="170"/>
    </location>
    <ligand>
        <name>ATP</name>
        <dbReference type="ChEBI" id="CHEBI:30616"/>
    </ligand>
</feature>
<feature type="binding site" evidence="1">
    <location>
        <position position="170"/>
    </location>
    <ligand>
        <name>substrate</name>
    </ligand>
</feature>
<feature type="binding site" evidence="1">
    <location>
        <begin position="228"/>
        <end position="233"/>
    </location>
    <ligand>
        <name>ATP</name>
        <dbReference type="ChEBI" id="CHEBI:30616"/>
    </ligand>
</feature>
<feature type="binding site" evidence="1">
    <location>
        <begin position="261"/>
        <end position="264"/>
    </location>
    <ligand>
        <name>ATP</name>
        <dbReference type="ChEBI" id="CHEBI:30616"/>
    </ligand>
</feature>
<feature type="binding site" evidence="1">
    <location>
        <position position="264"/>
    </location>
    <ligand>
        <name>substrate</name>
    </ligand>
</feature>
<sequence length="309" mass="33961">MSKKIAVIGECMIELSEKGADVKRGFGGDTLNTSVYIARQVDPAALTVHYVTALGTDSFSQQMLDAWHGENVDTSLTQRMENRLPGLYYIETDSTGERTFYYWRNEAAAKFWLESEQSAAICEELANFDYLYLSGISLAILSPTSREKLLSLLRECRANGGKVIFDNNYRPRLWASKEETQQVYQQMLECTDIAFLTLDDEDALWGQQPVEDVIARTHNAGVKEVVVKRGADSCLVSIAGEGLVDVPAVKLPKEKVIDTTAAGDSFSAGYLAVRLTGGSAENAAKRGHLTASTVIQYRGAIIPREAMPA</sequence>
<keyword id="KW-0067">ATP-binding</keyword>
<keyword id="KW-0119">Carbohydrate metabolism</keyword>
<keyword id="KW-0418">Kinase</keyword>
<keyword id="KW-0547">Nucleotide-binding</keyword>
<keyword id="KW-0808">Transferase</keyword>
<gene>
    <name type="primary">kdgK</name>
    <name type="ordered locus">ECW_m3789</name>
    <name type="ordered locus">WFL_18505</name>
    <name type="ORF">EschWDRAFT_3851</name>
</gene>
<protein>
    <recommendedName>
        <fullName>2-dehydro-3-deoxygluconokinase</fullName>
        <ecNumber>2.7.1.45</ecNumber>
    </recommendedName>
    <alternativeName>
        <fullName>2-keto-3-deoxygluconokinase</fullName>
    </alternativeName>
    <alternativeName>
        <fullName>3-deoxy-2-oxo-D-gluconate kinase</fullName>
    </alternativeName>
    <alternativeName>
        <fullName>KDG kinase</fullName>
    </alternativeName>
</protein>
<reference key="1">
    <citation type="submission" date="2010-07" db="EMBL/GenBank/DDBJ databases">
        <title>The draft genome of Escherichia coli W.</title>
        <authorList>
            <consortium name="US DOE Joint Genome Institute (JGI-PGF)"/>
            <person name="Lucas S."/>
            <person name="Copeland A."/>
            <person name="Lapidus A."/>
            <person name="Cheng J.-F."/>
            <person name="Bruce D."/>
            <person name="Goodwin L."/>
            <person name="Pitluck S."/>
            <person name="Land M.L."/>
            <person name="Hauser L."/>
            <person name="Chang Y.-J."/>
            <person name="Jeffries C."/>
            <person name="Tremaine M."/>
            <person name="Landick R."/>
            <person name="Keating D."/>
            <person name="Woyke T.J."/>
        </authorList>
    </citation>
    <scope>NUCLEOTIDE SEQUENCE [LARGE SCALE GENOMIC DNA]</scope>
    <source>
        <strain>ATCC 9637 / CCM 2024 / DSM 1116 / LMG 11080 / NBRC 13500 / NCIMB 8666 / NRRL B-766 / W</strain>
    </source>
</reference>
<reference key="2">
    <citation type="journal article" date="2011" name="BMC Genomics">
        <title>The genome sequence of E. coli W (ATCC 9637): comparative genome analysis and an improved genome-scale reconstruction of E. coli.</title>
        <authorList>
            <person name="Archer C.T."/>
            <person name="Kim J.F."/>
            <person name="Jeong H."/>
            <person name="Park J.H."/>
            <person name="Vickers C.E."/>
            <person name="Lee S.Y."/>
            <person name="Nielsen L.K."/>
        </authorList>
    </citation>
    <scope>NUCLEOTIDE SEQUENCE [LARGE SCALE GENOMIC DNA]</scope>
    <source>
        <strain>ATCC 9637 / CCM 2024 / DSM 1116 / LMG 11080 / NBRC 13500 / NCIMB 8666 / NRRL B-766 / W</strain>
    </source>
</reference>
<reference key="3">
    <citation type="journal article" date="2012" name="J. Ind. Microbiol. Biotechnol.">
        <title>Optical mapping and sequencing of the Escherichia coli KO11 genome reveal extensive chromosomal rearrangements, and multiple tandem copies of the Zymomonas mobilis pdc and adhB genes.</title>
        <authorList>
            <person name="Turner P.C."/>
            <person name="Yomano L.P."/>
            <person name="Jarboe L.R."/>
            <person name="York S.W."/>
            <person name="Baggett C.L."/>
            <person name="Moritz B.E."/>
            <person name="Zentz E.B."/>
            <person name="Shanmugam K.T."/>
            <person name="Ingram L.O."/>
        </authorList>
    </citation>
    <scope>NUCLEOTIDE SEQUENCE [LARGE SCALE GENOMIC DNA]</scope>
    <source>
        <strain>ATCC 9637 / CCM 2024 / DSM 1116 / LMG 11080 / NBRC 13500 / NCIMB 8666 / NRRL B-766 / W</strain>
    </source>
</reference>
<reference key="4">
    <citation type="journal article" date="1960" name="J. Biol. Chem.">
        <title>Uronic acid metabolism in bacteria. IV. Purification and properties of 2-keto-3-deoxy-D-gluconokinase in Escherichia coli.</title>
        <authorList>
            <person name="Cynkin M.A."/>
            <person name="Ashwell G."/>
        </authorList>
    </citation>
    <scope>FUNCTION</scope>
    <scope>CATALYTIC ACTIVITY</scope>
    <scope>BIOPHYSICOCHEMICAL PROPERTIES</scope>
    <source>
        <strain>ATCC 9637 / CCM 2024 / DSM 1116 / LMG 11080 / NBRC 13500 / NCIMB 8666 / NRRL B-766 / W</strain>
    </source>
</reference>
<name>KDGK_ECOLW</name>
<proteinExistence type="evidence at protein level"/>
<organism>
    <name type="scientific">Escherichia coli (strain ATCC 9637 / CCM 2024 / DSM 1116 / LMG 11080 / NBRC 13500 / NCIMB 8666 / NRRL B-766 / W)</name>
    <dbReference type="NCBI Taxonomy" id="566546"/>
    <lineage>
        <taxon>Bacteria</taxon>
        <taxon>Pseudomonadati</taxon>
        <taxon>Pseudomonadota</taxon>
        <taxon>Gammaproteobacteria</taxon>
        <taxon>Enterobacterales</taxon>
        <taxon>Enterobacteriaceae</taxon>
        <taxon>Escherichia</taxon>
    </lineage>
</organism>
<dbReference type="EC" id="2.7.1.45"/>
<dbReference type="EMBL" id="CP002185">
    <property type="protein sequence ID" value="ADT77132.1"/>
    <property type="molecule type" value="Genomic_DNA"/>
</dbReference>
<dbReference type="EMBL" id="CP002967">
    <property type="protein sequence ID" value="AFH13342.1"/>
    <property type="molecule type" value="Genomic_DNA"/>
</dbReference>
<dbReference type="EMBL" id="AEDF01000027">
    <property type="protein sequence ID" value="EFN36581.1"/>
    <property type="molecule type" value="Genomic_DNA"/>
</dbReference>
<dbReference type="RefSeq" id="WP_001296796.1">
    <property type="nucleotide sequence ID" value="NZ_WBMH01000032.1"/>
</dbReference>
<dbReference type="SMR" id="E0J5J4"/>
<dbReference type="GeneID" id="75201974"/>
<dbReference type="KEGG" id="ell:WFL_18505"/>
<dbReference type="KEGG" id="elw:ECW_m3789"/>
<dbReference type="PATRIC" id="fig|566546.30.peg.3849"/>
<dbReference type="HOGENOM" id="CLU_027634_8_1_6"/>
<dbReference type="UniPathway" id="UPA00856">
    <property type="reaction ID" value="UER00828"/>
</dbReference>
<dbReference type="Proteomes" id="UP000008525">
    <property type="component" value="Chromosome"/>
</dbReference>
<dbReference type="GO" id="GO:0005829">
    <property type="term" value="C:cytosol"/>
    <property type="evidence" value="ECO:0007669"/>
    <property type="project" value="TreeGrafter"/>
</dbReference>
<dbReference type="GO" id="GO:0008673">
    <property type="term" value="F:2-dehydro-3-deoxygluconokinase activity"/>
    <property type="evidence" value="ECO:0000314"/>
    <property type="project" value="UniProtKB"/>
</dbReference>
<dbReference type="GO" id="GO:0005524">
    <property type="term" value="F:ATP binding"/>
    <property type="evidence" value="ECO:0000250"/>
    <property type="project" value="UniProtKB"/>
</dbReference>
<dbReference type="GO" id="GO:0000166">
    <property type="term" value="F:nucleotide binding"/>
    <property type="evidence" value="ECO:0000250"/>
    <property type="project" value="UniProtKB"/>
</dbReference>
<dbReference type="GO" id="GO:0019698">
    <property type="term" value="P:D-galacturonate catabolic process"/>
    <property type="evidence" value="ECO:0007669"/>
    <property type="project" value="TreeGrafter"/>
</dbReference>
<dbReference type="GO" id="GO:0042840">
    <property type="term" value="P:D-glucuronate catabolic process"/>
    <property type="evidence" value="ECO:0007669"/>
    <property type="project" value="TreeGrafter"/>
</dbReference>
<dbReference type="GO" id="GO:0006974">
    <property type="term" value="P:DNA damage response"/>
    <property type="evidence" value="ECO:0007669"/>
    <property type="project" value="TreeGrafter"/>
</dbReference>
<dbReference type="GO" id="GO:0016310">
    <property type="term" value="P:phosphorylation"/>
    <property type="evidence" value="ECO:0000314"/>
    <property type="project" value="UniProtKB"/>
</dbReference>
<dbReference type="CDD" id="cd01166">
    <property type="entry name" value="KdgK"/>
    <property type="match status" value="1"/>
</dbReference>
<dbReference type="FunFam" id="3.40.1190.20:FF:000011">
    <property type="entry name" value="2-dehydro-3-deoxygluconokinase, putative"/>
    <property type="match status" value="1"/>
</dbReference>
<dbReference type="Gene3D" id="3.40.1190.20">
    <property type="match status" value="1"/>
</dbReference>
<dbReference type="InterPro" id="IPR002173">
    <property type="entry name" value="Carboh/pur_kinase_PfkB_CS"/>
</dbReference>
<dbReference type="InterPro" id="IPR050306">
    <property type="entry name" value="PfkB_Carbo_kinase"/>
</dbReference>
<dbReference type="InterPro" id="IPR011611">
    <property type="entry name" value="PfkB_dom"/>
</dbReference>
<dbReference type="InterPro" id="IPR029056">
    <property type="entry name" value="Ribokinase-like"/>
</dbReference>
<dbReference type="PANTHER" id="PTHR43085:SF15">
    <property type="entry name" value="2-DEHYDRO-3-DEOXYGLUCONOKINASE"/>
    <property type="match status" value="1"/>
</dbReference>
<dbReference type="PANTHER" id="PTHR43085">
    <property type="entry name" value="HEXOKINASE FAMILY MEMBER"/>
    <property type="match status" value="1"/>
</dbReference>
<dbReference type="Pfam" id="PF00294">
    <property type="entry name" value="PfkB"/>
    <property type="match status" value="1"/>
</dbReference>
<dbReference type="SUPFAM" id="SSF53613">
    <property type="entry name" value="Ribokinase-like"/>
    <property type="match status" value="1"/>
</dbReference>
<dbReference type="PROSITE" id="PS00584">
    <property type="entry name" value="PFKB_KINASES_2"/>
    <property type="match status" value="1"/>
</dbReference>
<accession>E0J5J4</accession>